<reference key="1">
    <citation type="journal article" date="2006" name="J. Bacteriol.">
        <title>Pathogenomic sequence analysis of Bacillus cereus and Bacillus thuringiensis isolates closely related to Bacillus anthracis.</title>
        <authorList>
            <person name="Han C.S."/>
            <person name="Xie G."/>
            <person name="Challacombe J.F."/>
            <person name="Altherr M.R."/>
            <person name="Bhotika S.S."/>
            <person name="Bruce D."/>
            <person name="Campbell C.S."/>
            <person name="Campbell M.L."/>
            <person name="Chen J."/>
            <person name="Chertkov O."/>
            <person name="Cleland C."/>
            <person name="Dimitrijevic M."/>
            <person name="Doggett N.A."/>
            <person name="Fawcett J.J."/>
            <person name="Glavina T."/>
            <person name="Goodwin L.A."/>
            <person name="Hill K.K."/>
            <person name="Hitchcock P."/>
            <person name="Jackson P.J."/>
            <person name="Keim P."/>
            <person name="Kewalramani A.R."/>
            <person name="Longmire J."/>
            <person name="Lucas S."/>
            <person name="Malfatti S."/>
            <person name="McMurry K."/>
            <person name="Meincke L.J."/>
            <person name="Misra M."/>
            <person name="Moseman B.L."/>
            <person name="Mundt M."/>
            <person name="Munk A.C."/>
            <person name="Okinaka R.T."/>
            <person name="Parson-Quintana B."/>
            <person name="Reilly L.P."/>
            <person name="Richardson P."/>
            <person name="Robinson D.L."/>
            <person name="Rubin E."/>
            <person name="Saunders E."/>
            <person name="Tapia R."/>
            <person name="Tesmer J.G."/>
            <person name="Thayer N."/>
            <person name="Thompson L.S."/>
            <person name="Tice H."/>
            <person name="Ticknor L.O."/>
            <person name="Wills P.L."/>
            <person name="Brettin T.S."/>
            <person name="Gilna P."/>
        </authorList>
    </citation>
    <scope>NUCLEOTIDE SEQUENCE [LARGE SCALE GENOMIC DNA]</scope>
    <source>
        <strain>ZK / E33L</strain>
    </source>
</reference>
<organism>
    <name type="scientific">Bacillus cereus (strain ZK / E33L)</name>
    <dbReference type="NCBI Taxonomy" id="288681"/>
    <lineage>
        <taxon>Bacteria</taxon>
        <taxon>Bacillati</taxon>
        <taxon>Bacillota</taxon>
        <taxon>Bacilli</taxon>
        <taxon>Bacillales</taxon>
        <taxon>Bacillaceae</taxon>
        <taxon>Bacillus</taxon>
        <taxon>Bacillus cereus group</taxon>
    </lineage>
</organism>
<name>SSPH_BACCZ</name>
<feature type="chain" id="PRO_0000162316" description="Small, acid-soluble spore protein H">
    <location>
        <begin position="1"/>
        <end position="59"/>
    </location>
</feature>
<evidence type="ECO:0000255" key="1">
    <source>
        <dbReference type="HAMAP-Rule" id="MF_00667"/>
    </source>
</evidence>
<evidence type="ECO:0000305" key="2"/>
<keyword id="KW-0749">Sporulation</keyword>
<protein>
    <recommendedName>
        <fullName evidence="1">Small, acid-soluble spore protein H</fullName>
        <shortName evidence="1">SASP H</shortName>
    </recommendedName>
</protein>
<accession>Q63G33</accession>
<sequence>MDVKRVKQILSSSNRIDVTYEGVPVWIESCDEQSGVAQVYDVSNPGESVHVNVTALEEK</sequence>
<proteinExistence type="inferred from homology"/>
<dbReference type="EMBL" id="CP000001">
    <property type="protein sequence ID" value="AAU19719.1"/>
    <property type="status" value="ALT_INIT"/>
    <property type="molecule type" value="Genomic_DNA"/>
</dbReference>
<dbReference type="RefSeq" id="WP_000382677.1">
    <property type="nucleotide sequence ID" value="NC_006274.1"/>
</dbReference>
<dbReference type="KEGG" id="bcz:BCE33L0523"/>
<dbReference type="PATRIC" id="fig|288681.22.peg.5070"/>
<dbReference type="Proteomes" id="UP000002612">
    <property type="component" value="Chromosome"/>
</dbReference>
<dbReference type="GO" id="GO:0042601">
    <property type="term" value="C:endospore-forming forespore"/>
    <property type="evidence" value="ECO:0007669"/>
    <property type="project" value="InterPro"/>
</dbReference>
<dbReference type="GO" id="GO:0030436">
    <property type="term" value="P:asexual sporulation"/>
    <property type="evidence" value="ECO:0007669"/>
    <property type="project" value="UniProtKB-UniRule"/>
</dbReference>
<dbReference type="GO" id="GO:0030435">
    <property type="term" value="P:sporulation resulting in formation of a cellular spore"/>
    <property type="evidence" value="ECO:0007669"/>
    <property type="project" value="UniProtKB-KW"/>
</dbReference>
<dbReference type="HAMAP" id="MF_00667">
    <property type="entry name" value="SspH"/>
    <property type="match status" value="1"/>
</dbReference>
<dbReference type="InterPro" id="IPR012610">
    <property type="entry name" value="SASP_SspH"/>
</dbReference>
<dbReference type="NCBIfam" id="NF002451">
    <property type="entry name" value="PRK01625.1"/>
    <property type="match status" value="1"/>
</dbReference>
<dbReference type="NCBIfam" id="TIGR02861">
    <property type="entry name" value="SASP_H"/>
    <property type="match status" value="1"/>
</dbReference>
<dbReference type="Pfam" id="PF08141">
    <property type="entry name" value="SspH"/>
    <property type="match status" value="1"/>
</dbReference>
<gene>
    <name evidence="1" type="primary">sspH</name>
    <name type="ordered locus">BCE33L0523</name>
</gene>
<comment type="subcellular location">
    <subcellularLocation>
        <location evidence="1">Spore core</location>
    </subcellularLocation>
</comment>
<comment type="induction">
    <text evidence="1">Expressed only in the forespore compartment of sporulating cells.</text>
</comment>
<comment type="similarity">
    <text evidence="1">Belongs to the SspH family.</text>
</comment>
<comment type="sequence caution" evidence="2">
    <conflict type="erroneous initiation">
        <sequence resource="EMBL-CDS" id="AAU19719"/>
    </conflict>
</comment>